<proteinExistence type="inferred from homology"/>
<reference key="1">
    <citation type="submission" date="2006-08" db="EMBL/GenBank/DDBJ databases">
        <title>Positive selection in transcription factor genes on the human lineage.</title>
        <authorList>
            <person name="Nickel G.C."/>
            <person name="Tefft D.L."/>
            <person name="Trevarthen K."/>
            <person name="Funt J."/>
            <person name="Adams M.D."/>
        </authorList>
    </citation>
    <scope>NUCLEOTIDE SEQUENCE [GENOMIC DNA]</scope>
</reference>
<protein>
    <recommendedName>
        <fullName>Homeobox protein Hox-B1</fullName>
    </recommendedName>
</protein>
<keyword id="KW-0217">Developmental protein</keyword>
<keyword id="KW-0238">DNA-binding</keyword>
<keyword id="KW-0371">Homeobox</keyword>
<keyword id="KW-0539">Nucleus</keyword>
<keyword id="KW-1185">Reference proteome</keyword>
<keyword id="KW-0804">Transcription</keyword>
<keyword id="KW-0805">Transcription regulation</keyword>
<evidence type="ECO:0000250" key="1"/>
<evidence type="ECO:0000255" key="2">
    <source>
        <dbReference type="PROSITE-ProRule" id="PRU00108"/>
    </source>
</evidence>
<evidence type="ECO:0000256" key="3">
    <source>
        <dbReference type="SAM" id="MobiDB-lite"/>
    </source>
</evidence>
<evidence type="ECO:0000305" key="4"/>
<organism>
    <name type="scientific">Pan troglodytes</name>
    <name type="common">Chimpanzee</name>
    <dbReference type="NCBI Taxonomy" id="9598"/>
    <lineage>
        <taxon>Eukaryota</taxon>
        <taxon>Metazoa</taxon>
        <taxon>Chordata</taxon>
        <taxon>Craniata</taxon>
        <taxon>Vertebrata</taxon>
        <taxon>Euteleostomi</taxon>
        <taxon>Mammalia</taxon>
        <taxon>Eutheria</taxon>
        <taxon>Euarchontoglires</taxon>
        <taxon>Primates</taxon>
        <taxon>Haplorrhini</taxon>
        <taxon>Catarrhini</taxon>
        <taxon>Hominidae</taxon>
        <taxon>Pan</taxon>
    </lineage>
</organism>
<gene>
    <name type="primary">HOXB1</name>
</gene>
<feature type="chain" id="PRO_0000285426" description="Homeobox protein Hox-B1">
    <location>
        <begin position="1"/>
        <end position="301"/>
    </location>
</feature>
<feature type="DNA-binding region" description="Homeobox" evidence="2">
    <location>
        <begin position="203"/>
        <end position="262"/>
    </location>
</feature>
<feature type="region of interest" description="Disordered" evidence="3">
    <location>
        <begin position="19"/>
        <end position="77"/>
    </location>
</feature>
<feature type="region of interest" description="Disordered" evidence="3">
    <location>
        <begin position="127"/>
        <end position="149"/>
    </location>
</feature>
<feature type="region of interest" description="Disordered" evidence="3">
    <location>
        <begin position="255"/>
        <end position="301"/>
    </location>
</feature>
<feature type="short sequence motif" description="Antp-type hexapeptide">
    <location>
        <begin position="179"/>
        <end position="184"/>
    </location>
</feature>
<feature type="compositionally biased region" description="Polar residues" evidence="3">
    <location>
        <begin position="19"/>
        <end position="38"/>
    </location>
</feature>
<feature type="compositionally biased region" description="Polar residues" evidence="3">
    <location>
        <begin position="55"/>
        <end position="70"/>
    </location>
</feature>
<feature type="compositionally biased region" description="Polar residues" evidence="3">
    <location>
        <begin position="284"/>
        <end position="301"/>
    </location>
</feature>
<sequence length="301" mass="32111">MDYNRMNSFLEYPLCNRGSSAYSAHSAPTSFPPSSAQAVDSYASEGRYGGGLSSPAFQQNSGYPAQQPPSTLGVPFPSSAPSGYAPAACSPSYGPSQYYPLGQSEGDGGYFHPSSYGAQLGGLSDGYGAGGAGPGPYPPQHPPYGNEQTASFAPAYADLLSEDKETPCPSEPNTPTARTFDWMKVKRNPPKTAKVSEPGLGSPSGLRTNFTTRQLTELEKEFHFNKYLSRARRVEIAATLELNETQVKIWFQNRRMKQKKREREGGRVPPAPPGCPKEAAGDASDQSTCTSPEASPSSVTS</sequence>
<accession>A2T6Z0</accession>
<comment type="function">
    <text evidence="1">Sequence-specific transcription factor which is part of a developmental regulatory system that provides cells with specific positional identities on the anterior-posterior axis. Acts on the anterior body structures (By similarity).</text>
</comment>
<comment type="subcellular location">
    <subcellularLocation>
        <location evidence="2">Nucleus</location>
    </subcellularLocation>
</comment>
<comment type="similarity">
    <text evidence="4">Belongs to the Antp homeobox family. Labial subfamily.</text>
</comment>
<dbReference type="EMBL" id="DQ977336">
    <property type="protein sequence ID" value="ABM91945.1"/>
    <property type="molecule type" value="Genomic_DNA"/>
</dbReference>
<dbReference type="RefSeq" id="NP_001075041.1">
    <property type="nucleotide sequence ID" value="NM_001081572.1"/>
</dbReference>
<dbReference type="SMR" id="A2T6Z0"/>
<dbReference type="FunCoup" id="A2T6Z0">
    <property type="interactions" value="693"/>
</dbReference>
<dbReference type="STRING" id="9598.ENSPTRP00000015899"/>
<dbReference type="PaxDb" id="9598-ENSPTRP00000015899"/>
<dbReference type="Ensembl" id="ENSPTRT00000017173.3">
    <property type="protein sequence ID" value="ENSPTRP00000015899.2"/>
    <property type="gene ID" value="ENSPTRG00000009351.3"/>
</dbReference>
<dbReference type="GeneID" id="749225"/>
<dbReference type="KEGG" id="ptr:749225"/>
<dbReference type="CTD" id="3211"/>
<dbReference type="VGNC" id="VGNC:9324">
    <property type="gene designation" value="HOXB1"/>
</dbReference>
<dbReference type="eggNOG" id="KOG0489">
    <property type="taxonomic scope" value="Eukaryota"/>
</dbReference>
<dbReference type="GeneTree" id="ENSGT00940000159503"/>
<dbReference type="HOGENOM" id="CLU_058839_1_0_1"/>
<dbReference type="InParanoid" id="A2T6Z0"/>
<dbReference type="OMA" id="ACNPSYG"/>
<dbReference type="OrthoDB" id="11517at9604"/>
<dbReference type="TreeFam" id="TF317730"/>
<dbReference type="Proteomes" id="UP000002277">
    <property type="component" value="Chromosome 17"/>
</dbReference>
<dbReference type="GO" id="GO:0005654">
    <property type="term" value="C:nucleoplasm"/>
    <property type="evidence" value="ECO:0007669"/>
    <property type="project" value="Ensembl"/>
</dbReference>
<dbReference type="GO" id="GO:0005634">
    <property type="term" value="C:nucleus"/>
    <property type="evidence" value="ECO:0000318"/>
    <property type="project" value="GO_Central"/>
</dbReference>
<dbReference type="GO" id="GO:0001228">
    <property type="term" value="F:DNA-binding transcription activator activity, RNA polymerase II-specific"/>
    <property type="evidence" value="ECO:0007669"/>
    <property type="project" value="Ensembl"/>
</dbReference>
<dbReference type="GO" id="GO:0000981">
    <property type="term" value="F:DNA-binding transcription factor activity, RNA polymerase II-specific"/>
    <property type="evidence" value="ECO:0000318"/>
    <property type="project" value="GO_Central"/>
</dbReference>
<dbReference type="GO" id="GO:0019904">
    <property type="term" value="F:protein domain specific binding"/>
    <property type="evidence" value="ECO:0007669"/>
    <property type="project" value="Ensembl"/>
</dbReference>
<dbReference type="GO" id="GO:0000978">
    <property type="term" value="F:RNA polymerase II cis-regulatory region sequence-specific DNA binding"/>
    <property type="evidence" value="ECO:0000318"/>
    <property type="project" value="GO_Central"/>
</dbReference>
<dbReference type="GO" id="GO:0048646">
    <property type="term" value="P:anatomical structure formation involved in morphogenesis"/>
    <property type="evidence" value="ECO:0007669"/>
    <property type="project" value="Ensembl"/>
</dbReference>
<dbReference type="GO" id="GO:0009952">
    <property type="term" value="P:anterior/posterior pattern specification"/>
    <property type="evidence" value="ECO:0007669"/>
    <property type="project" value="Ensembl"/>
</dbReference>
<dbReference type="GO" id="GO:0048704">
    <property type="term" value="P:embryonic skeletal system morphogenesis"/>
    <property type="evidence" value="ECO:0007669"/>
    <property type="project" value="Ensembl"/>
</dbReference>
<dbReference type="GO" id="GO:0021612">
    <property type="term" value="P:facial nerve structural organization"/>
    <property type="evidence" value="ECO:0007669"/>
    <property type="project" value="Ensembl"/>
</dbReference>
<dbReference type="GO" id="GO:0021754">
    <property type="term" value="P:facial nucleus development"/>
    <property type="evidence" value="ECO:0007669"/>
    <property type="project" value="Ensembl"/>
</dbReference>
<dbReference type="GO" id="GO:0006357">
    <property type="term" value="P:regulation of transcription by RNA polymerase II"/>
    <property type="evidence" value="ECO:0000318"/>
    <property type="project" value="GO_Central"/>
</dbReference>
<dbReference type="GO" id="GO:0021570">
    <property type="term" value="P:rhombomere 4 development"/>
    <property type="evidence" value="ECO:0007669"/>
    <property type="project" value="Ensembl"/>
</dbReference>
<dbReference type="GO" id="GO:0021571">
    <property type="term" value="P:rhombomere 5 development"/>
    <property type="evidence" value="ECO:0007669"/>
    <property type="project" value="Ensembl"/>
</dbReference>
<dbReference type="CDD" id="cd00086">
    <property type="entry name" value="homeodomain"/>
    <property type="match status" value="1"/>
</dbReference>
<dbReference type="FunFam" id="1.10.10.60:FF:000113">
    <property type="entry name" value="homeobox protein Hox-B1"/>
    <property type="match status" value="1"/>
</dbReference>
<dbReference type="Gene3D" id="1.10.10.60">
    <property type="entry name" value="Homeodomain-like"/>
    <property type="match status" value="1"/>
</dbReference>
<dbReference type="InterPro" id="IPR001356">
    <property type="entry name" value="HD"/>
</dbReference>
<dbReference type="InterPro" id="IPR020479">
    <property type="entry name" value="HD_metazoa"/>
</dbReference>
<dbReference type="InterPro" id="IPR017970">
    <property type="entry name" value="Homeobox_CS"/>
</dbReference>
<dbReference type="InterPro" id="IPR009057">
    <property type="entry name" value="Homeodomain-like_sf"/>
</dbReference>
<dbReference type="InterPro" id="IPR046327">
    <property type="entry name" value="HXA1/B1/D1"/>
</dbReference>
<dbReference type="PANTHER" id="PTHR45946:SF5">
    <property type="entry name" value="HOMEOBOX PROTEIN HOX-B1"/>
    <property type="match status" value="1"/>
</dbReference>
<dbReference type="PANTHER" id="PTHR45946">
    <property type="entry name" value="HOMEOBOX PROTEIN ROUGH-RELATED"/>
    <property type="match status" value="1"/>
</dbReference>
<dbReference type="Pfam" id="PF00046">
    <property type="entry name" value="Homeodomain"/>
    <property type="match status" value="1"/>
</dbReference>
<dbReference type="PRINTS" id="PR00024">
    <property type="entry name" value="HOMEOBOX"/>
</dbReference>
<dbReference type="SMART" id="SM00389">
    <property type="entry name" value="HOX"/>
    <property type="match status" value="1"/>
</dbReference>
<dbReference type="SUPFAM" id="SSF46689">
    <property type="entry name" value="Homeodomain-like"/>
    <property type="match status" value="1"/>
</dbReference>
<dbReference type="PROSITE" id="PS00027">
    <property type="entry name" value="HOMEOBOX_1"/>
    <property type="match status" value="1"/>
</dbReference>
<dbReference type="PROSITE" id="PS50071">
    <property type="entry name" value="HOMEOBOX_2"/>
    <property type="match status" value="1"/>
</dbReference>
<name>HXB1_PANTR</name>